<name>FRIM_TRENE</name>
<protein>
    <recommendedName>
        <fullName evidence="5">Ferritin, middle subunit</fullName>
        <shortName evidence="5">Ferritin M</shortName>
        <ecNumber>1.16.3.1</ecNumber>
    </recommendedName>
</protein>
<accession>P85835</accession>
<evidence type="ECO:0000250" key="1">
    <source>
        <dbReference type="UniProtKB" id="P07798"/>
    </source>
</evidence>
<evidence type="ECO:0000255" key="2"/>
<evidence type="ECO:0000255" key="3">
    <source>
        <dbReference type="PROSITE-ProRule" id="PRU00085"/>
    </source>
</evidence>
<evidence type="ECO:0000269" key="4">
    <source>
    </source>
</evidence>
<evidence type="ECO:0000303" key="5">
    <source>
    </source>
</evidence>
<evidence type="ECO:0000305" key="6"/>
<reference evidence="6" key="1">
    <citation type="journal article" date="2008" name="Arch. Biochem. Biophys.">
        <title>The unusual co-assembly of H- and M-chains in the ferritin molecule from the Antarctic teleosts Trematomus bernacchii and Trematomus newnesi.</title>
        <authorList>
            <person name="Giorgi A."/>
            <person name="Mignogna G."/>
            <person name="Bellapadrona G."/>
            <person name="Gattoni M."/>
            <person name="Chiaraluce R."/>
            <person name="Consalvi V."/>
            <person name="Chiancone E."/>
            <person name="Stefanini S."/>
        </authorList>
    </citation>
    <scope>PROTEIN SEQUENCE</scope>
    <scope>CATALYTIC ACTIVITY</scope>
    <scope>BIOPHYSICOCHEMICAL PROPERTIES</scope>
    <scope>SUBUNIT</scope>
    <scope>TISSUE SPECIFICITY</scope>
    <source>
        <tissue evidence="4">Liver</tissue>
        <tissue evidence="4">Spleen</tissue>
    </source>
</reference>
<organism>
    <name type="scientific">Trematomus newnesi</name>
    <name type="common">Dusky notothen</name>
    <dbReference type="NCBI Taxonomy" id="35730"/>
    <lineage>
        <taxon>Eukaryota</taxon>
        <taxon>Metazoa</taxon>
        <taxon>Chordata</taxon>
        <taxon>Craniata</taxon>
        <taxon>Vertebrata</taxon>
        <taxon>Euteleostomi</taxon>
        <taxon>Actinopterygii</taxon>
        <taxon>Neopterygii</taxon>
        <taxon>Teleostei</taxon>
        <taxon>Neoteleostei</taxon>
        <taxon>Acanthomorphata</taxon>
        <taxon>Eupercaria</taxon>
        <taxon>Perciformes</taxon>
        <taxon>Notothenioidei</taxon>
        <taxon>Nototheniidae</taxon>
        <taxon>Trematomus</taxon>
    </lineage>
</organism>
<dbReference type="EC" id="1.16.3.1"/>
<dbReference type="SMR" id="P85835"/>
<dbReference type="GO" id="GO:0005737">
    <property type="term" value="C:cytoplasm"/>
    <property type="evidence" value="ECO:0007669"/>
    <property type="project" value="TreeGrafter"/>
</dbReference>
<dbReference type="GO" id="GO:0008199">
    <property type="term" value="F:ferric iron binding"/>
    <property type="evidence" value="ECO:0007669"/>
    <property type="project" value="InterPro"/>
</dbReference>
<dbReference type="GO" id="GO:0008198">
    <property type="term" value="F:ferrous iron binding"/>
    <property type="evidence" value="ECO:0007669"/>
    <property type="project" value="TreeGrafter"/>
</dbReference>
<dbReference type="GO" id="GO:0004322">
    <property type="term" value="F:ferroxidase activity"/>
    <property type="evidence" value="ECO:0007669"/>
    <property type="project" value="UniProtKB-EC"/>
</dbReference>
<dbReference type="GO" id="GO:0006879">
    <property type="term" value="P:intracellular iron ion homeostasis"/>
    <property type="evidence" value="ECO:0007669"/>
    <property type="project" value="UniProtKB-KW"/>
</dbReference>
<dbReference type="GO" id="GO:0006826">
    <property type="term" value="P:iron ion transport"/>
    <property type="evidence" value="ECO:0007669"/>
    <property type="project" value="InterPro"/>
</dbReference>
<dbReference type="CDD" id="cd01056">
    <property type="entry name" value="Euk_Ferritin"/>
    <property type="match status" value="1"/>
</dbReference>
<dbReference type="FunFam" id="1.20.1260.10:FF:000002">
    <property type="entry name" value="Ferritin, mitochondrial"/>
    <property type="match status" value="1"/>
</dbReference>
<dbReference type="Gene3D" id="1.20.1260.10">
    <property type="match status" value="1"/>
</dbReference>
<dbReference type="InterPro" id="IPR001519">
    <property type="entry name" value="Ferritin"/>
</dbReference>
<dbReference type="InterPro" id="IPR012347">
    <property type="entry name" value="Ferritin-like"/>
</dbReference>
<dbReference type="InterPro" id="IPR009040">
    <property type="entry name" value="Ferritin-like_diiron"/>
</dbReference>
<dbReference type="InterPro" id="IPR009078">
    <property type="entry name" value="Ferritin-like_SF"/>
</dbReference>
<dbReference type="InterPro" id="IPR014034">
    <property type="entry name" value="Ferritin_CS"/>
</dbReference>
<dbReference type="InterPro" id="IPR008331">
    <property type="entry name" value="Ferritin_DPS_dom"/>
</dbReference>
<dbReference type="PANTHER" id="PTHR11431">
    <property type="entry name" value="FERRITIN"/>
    <property type="match status" value="1"/>
</dbReference>
<dbReference type="PANTHER" id="PTHR11431:SF54">
    <property type="entry name" value="FERRITIN"/>
    <property type="match status" value="1"/>
</dbReference>
<dbReference type="Pfam" id="PF00210">
    <property type="entry name" value="Ferritin"/>
    <property type="match status" value="1"/>
</dbReference>
<dbReference type="SUPFAM" id="SSF47240">
    <property type="entry name" value="Ferritin-like"/>
    <property type="match status" value="1"/>
</dbReference>
<dbReference type="PROSITE" id="PS00204">
    <property type="entry name" value="FERRITIN_2"/>
    <property type="match status" value="1"/>
</dbReference>
<dbReference type="PROSITE" id="PS50905">
    <property type="entry name" value="FERRITIN_LIKE"/>
    <property type="match status" value="1"/>
</dbReference>
<sequence length="176" mass="20450">MDSQVRQNYHRDCEAAVNRMINMELFASYSYTSMAFYFSRDDVALPGFAHFFKENSEEEREHADKLLTFQNSRGGRIFLQDIKKPERDEWGSGLDALQSSLQLEKNVNQALLDLHKIASDHTDPHMCDFLETHYLNEQVESIKKLGDFITNLSRMDAVKNKMAEYLFDKHTMGGKN</sequence>
<comment type="function">
    <text evidence="1">Stores iron in a soluble, non-toxic, readily available form. Important for iron homeostasis. Has ferroxidase activity. Iron is taken up in the ferrous form and deposited as ferric hydroxides after oxidation (By similarity).</text>
</comment>
<comment type="catalytic activity">
    <reaction evidence="4">
        <text>4 Fe(2+) + O2 + 4 H(+) = 4 Fe(3+) + 2 H2O</text>
        <dbReference type="Rhea" id="RHEA:11148"/>
        <dbReference type="ChEBI" id="CHEBI:15377"/>
        <dbReference type="ChEBI" id="CHEBI:15378"/>
        <dbReference type="ChEBI" id="CHEBI:15379"/>
        <dbReference type="ChEBI" id="CHEBI:29033"/>
        <dbReference type="ChEBI" id="CHEBI:29034"/>
        <dbReference type="EC" id="1.16.3.1"/>
    </reaction>
</comment>
<comment type="biophysicochemical properties">
    <temperatureDependence>
        <text evidence="4">Thermostable.</text>
    </temperatureDependence>
</comment>
<comment type="subunit">
    <text evidence="4 6">In liver, forms a heteromer consisting of middle and heavy subunits. In spleen, forms a homomer. The functional molecule forms a roughly spherical shell with a diameter of 12 nm and contains a central cavity into which the insoluble mineral iron core is deposited.</text>
</comment>
<comment type="tissue specificity">
    <text evidence="4">Liver and spleen (at protein level).</text>
</comment>
<comment type="similarity">
    <text evidence="2">Belongs to the ferritin family.</text>
</comment>
<feature type="chain" id="PRO_0000352783" description="Ferritin, middle subunit">
    <location>
        <begin position="1"/>
        <end position="176"/>
    </location>
</feature>
<feature type="domain" description="Ferritin-like diiron" evidence="3">
    <location>
        <begin position="7"/>
        <end position="156"/>
    </location>
</feature>
<feature type="binding site" evidence="1 3">
    <location>
        <position position="24"/>
    </location>
    <ligand>
        <name>Fe cation</name>
        <dbReference type="ChEBI" id="CHEBI:24875"/>
        <label>1</label>
    </ligand>
</feature>
<feature type="binding site" evidence="1 3">
    <location>
        <position position="59"/>
    </location>
    <ligand>
        <name>Fe cation</name>
        <dbReference type="ChEBI" id="CHEBI:24875"/>
        <label>1</label>
    </ligand>
</feature>
<feature type="binding site" evidence="1 3">
    <location>
        <position position="59"/>
    </location>
    <ligand>
        <name>Fe cation</name>
        <dbReference type="ChEBI" id="CHEBI:24875"/>
        <label>2</label>
    </ligand>
</feature>
<feature type="binding site" evidence="1 3">
    <location>
        <position position="62"/>
    </location>
    <ligand>
        <name>Fe cation</name>
        <dbReference type="ChEBI" id="CHEBI:24875"/>
        <label>1</label>
    </ligand>
</feature>
<feature type="binding site" evidence="1 3">
    <location>
        <position position="104"/>
    </location>
    <ligand>
        <name>Fe cation</name>
        <dbReference type="ChEBI" id="CHEBI:24875"/>
        <label>2</label>
    </ligand>
</feature>
<feature type="binding site" evidence="1 3">
    <location>
        <position position="138"/>
    </location>
    <ligand>
        <name>Fe cation</name>
        <dbReference type="ChEBI" id="CHEBI:24875"/>
        <label>2</label>
    </ligand>
</feature>
<keyword id="KW-0903">Direct protein sequencing</keyword>
<keyword id="KW-0408">Iron</keyword>
<keyword id="KW-0409">Iron storage</keyword>
<keyword id="KW-0479">Metal-binding</keyword>
<keyword id="KW-0560">Oxidoreductase</keyword>
<proteinExistence type="evidence at protein level"/>